<reference key="1">
    <citation type="journal article" date="2011" name="Stand. Genomic Sci.">
        <title>Complete genome sequence of the filamentous gliding predatory bacterium Herpetosiphon aurantiacus type strain (114-95(T)).</title>
        <authorList>
            <person name="Kiss H."/>
            <person name="Nett M."/>
            <person name="Domin N."/>
            <person name="Martin K."/>
            <person name="Maresca J.A."/>
            <person name="Copeland A."/>
            <person name="Lapidus A."/>
            <person name="Lucas S."/>
            <person name="Berry K.W."/>
            <person name="Glavina Del Rio T."/>
            <person name="Dalin E."/>
            <person name="Tice H."/>
            <person name="Pitluck S."/>
            <person name="Richardson P."/>
            <person name="Bruce D."/>
            <person name="Goodwin L."/>
            <person name="Han C."/>
            <person name="Detter J.C."/>
            <person name="Schmutz J."/>
            <person name="Brettin T."/>
            <person name="Land M."/>
            <person name="Hauser L."/>
            <person name="Kyrpides N.C."/>
            <person name="Ivanova N."/>
            <person name="Goeker M."/>
            <person name="Woyke T."/>
            <person name="Klenk H.P."/>
            <person name="Bryant D.A."/>
        </authorList>
    </citation>
    <scope>NUCLEOTIDE SEQUENCE [LARGE SCALE GENOMIC DNA]</scope>
    <source>
        <strain>ATCC 23779 / DSM 785 / 114-95</strain>
    </source>
</reference>
<dbReference type="EC" id="5.6.1.7" evidence="1"/>
<dbReference type="EMBL" id="CP000875">
    <property type="protein sequence ID" value="ABX06315.1"/>
    <property type="molecule type" value="Genomic_DNA"/>
</dbReference>
<dbReference type="SMR" id="A9B6A4"/>
<dbReference type="FunCoup" id="A9B6A4">
    <property type="interactions" value="505"/>
</dbReference>
<dbReference type="STRING" id="316274.Haur_3679"/>
<dbReference type="KEGG" id="hau:Haur_3679"/>
<dbReference type="eggNOG" id="COG0459">
    <property type="taxonomic scope" value="Bacteria"/>
</dbReference>
<dbReference type="HOGENOM" id="CLU_016503_3_0_0"/>
<dbReference type="InParanoid" id="A9B6A4"/>
<dbReference type="Proteomes" id="UP000000787">
    <property type="component" value="Chromosome"/>
</dbReference>
<dbReference type="GO" id="GO:0005737">
    <property type="term" value="C:cytoplasm"/>
    <property type="evidence" value="ECO:0007669"/>
    <property type="project" value="UniProtKB-SubCell"/>
</dbReference>
<dbReference type="GO" id="GO:0005524">
    <property type="term" value="F:ATP binding"/>
    <property type="evidence" value="ECO:0007669"/>
    <property type="project" value="UniProtKB-UniRule"/>
</dbReference>
<dbReference type="GO" id="GO:0140662">
    <property type="term" value="F:ATP-dependent protein folding chaperone"/>
    <property type="evidence" value="ECO:0007669"/>
    <property type="project" value="InterPro"/>
</dbReference>
<dbReference type="GO" id="GO:0016853">
    <property type="term" value="F:isomerase activity"/>
    <property type="evidence" value="ECO:0007669"/>
    <property type="project" value="UniProtKB-KW"/>
</dbReference>
<dbReference type="GO" id="GO:0051082">
    <property type="term" value="F:unfolded protein binding"/>
    <property type="evidence" value="ECO:0007669"/>
    <property type="project" value="UniProtKB-UniRule"/>
</dbReference>
<dbReference type="GO" id="GO:0042026">
    <property type="term" value="P:protein refolding"/>
    <property type="evidence" value="ECO:0007669"/>
    <property type="project" value="UniProtKB-UniRule"/>
</dbReference>
<dbReference type="CDD" id="cd03344">
    <property type="entry name" value="GroEL"/>
    <property type="match status" value="1"/>
</dbReference>
<dbReference type="FunFam" id="3.50.7.10:FF:000001">
    <property type="entry name" value="60 kDa chaperonin"/>
    <property type="match status" value="1"/>
</dbReference>
<dbReference type="Gene3D" id="3.50.7.10">
    <property type="entry name" value="GroEL"/>
    <property type="match status" value="1"/>
</dbReference>
<dbReference type="Gene3D" id="1.10.560.10">
    <property type="entry name" value="GroEL-like equatorial domain"/>
    <property type="match status" value="1"/>
</dbReference>
<dbReference type="Gene3D" id="3.30.260.10">
    <property type="entry name" value="TCP-1-like chaperonin intermediate domain"/>
    <property type="match status" value="1"/>
</dbReference>
<dbReference type="HAMAP" id="MF_00600">
    <property type="entry name" value="CH60"/>
    <property type="match status" value="1"/>
</dbReference>
<dbReference type="InterPro" id="IPR018370">
    <property type="entry name" value="Chaperonin_Cpn60_CS"/>
</dbReference>
<dbReference type="InterPro" id="IPR001844">
    <property type="entry name" value="Cpn60/GroEL"/>
</dbReference>
<dbReference type="InterPro" id="IPR002423">
    <property type="entry name" value="Cpn60/GroEL/TCP-1"/>
</dbReference>
<dbReference type="InterPro" id="IPR027409">
    <property type="entry name" value="GroEL-like_apical_dom_sf"/>
</dbReference>
<dbReference type="InterPro" id="IPR027413">
    <property type="entry name" value="GROEL-like_equatorial_sf"/>
</dbReference>
<dbReference type="InterPro" id="IPR027410">
    <property type="entry name" value="TCP-1-like_intermed_sf"/>
</dbReference>
<dbReference type="NCBIfam" id="TIGR02348">
    <property type="entry name" value="GroEL"/>
    <property type="match status" value="1"/>
</dbReference>
<dbReference type="NCBIfam" id="NF000592">
    <property type="entry name" value="PRK00013.1"/>
    <property type="match status" value="1"/>
</dbReference>
<dbReference type="NCBIfam" id="NF009487">
    <property type="entry name" value="PRK12849.1"/>
    <property type="match status" value="1"/>
</dbReference>
<dbReference type="NCBIfam" id="NF009488">
    <property type="entry name" value="PRK12850.1"/>
    <property type="match status" value="1"/>
</dbReference>
<dbReference type="NCBIfam" id="NF009489">
    <property type="entry name" value="PRK12851.1"/>
    <property type="match status" value="1"/>
</dbReference>
<dbReference type="PANTHER" id="PTHR45633">
    <property type="entry name" value="60 KDA HEAT SHOCK PROTEIN, MITOCHONDRIAL"/>
    <property type="match status" value="1"/>
</dbReference>
<dbReference type="Pfam" id="PF00118">
    <property type="entry name" value="Cpn60_TCP1"/>
    <property type="match status" value="1"/>
</dbReference>
<dbReference type="PRINTS" id="PR00298">
    <property type="entry name" value="CHAPERONIN60"/>
</dbReference>
<dbReference type="SUPFAM" id="SSF52029">
    <property type="entry name" value="GroEL apical domain-like"/>
    <property type="match status" value="1"/>
</dbReference>
<dbReference type="SUPFAM" id="SSF48592">
    <property type="entry name" value="GroEL equatorial domain-like"/>
    <property type="match status" value="1"/>
</dbReference>
<dbReference type="SUPFAM" id="SSF54849">
    <property type="entry name" value="GroEL-intermediate domain like"/>
    <property type="match status" value="1"/>
</dbReference>
<dbReference type="PROSITE" id="PS00296">
    <property type="entry name" value="CHAPERONINS_CPN60"/>
    <property type="match status" value="1"/>
</dbReference>
<accession>A9B6A4</accession>
<feature type="chain" id="PRO_1000130026" description="Chaperonin GroEL">
    <location>
        <begin position="1"/>
        <end position="547"/>
    </location>
</feature>
<feature type="binding site" evidence="1">
    <location>
        <begin position="29"/>
        <end position="32"/>
    </location>
    <ligand>
        <name>ATP</name>
        <dbReference type="ChEBI" id="CHEBI:30616"/>
    </ligand>
</feature>
<feature type="binding site" evidence="1">
    <location>
        <begin position="86"/>
        <end position="90"/>
    </location>
    <ligand>
        <name>ATP</name>
        <dbReference type="ChEBI" id="CHEBI:30616"/>
    </ligand>
</feature>
<feature type="binding site" evidence="1">
    <location>
        <position position="413"/>
    </location>
    <ligand>
        <name>ATP</name>
        <dbReference type="ChEBI" id="CHEBI:30616"/>
    </ligand>
</feature>
<feature type="binding site" evidence="1">
    <location>
        <position position="498"/>
    </location>
    <ligand>
        <name>ATP</name>
        <dbReference type="ChEBI" id="CHEBI:30616"/>
    </ligand>
</feature>
<gene>
    <name evidence="1" type="primary">groEL</name>
    <name evidence="1" type="synonym">groL</name>
    <name type="ordered locus">Haur_3679</name>
</gene>
<protein>
    <recommendedName>
        <fullName evidence="1">Chaperonin GroEL</fullName>
        <ecNumber evidence="1">5.6.1.7</ecNumber>
    </recommendedName>
    <alternativeName>
        <fullName evidence="1">60 kDa chaperonin</fullName>
    </alternativeName>
    <alternativeName>
        <fullName evidence="1">Chaperonin-60</fullName>
        <shortName evidence="1">Cpn60</shortName>
    </alternativeName>
</protein>
<organism>
    <name type="scientific">Herpetosiphon aurantiacus (strain ATCC 23779 / DSM 785 / 114-95)</name>
    <dbReference type="NCBI Taxonomy" id="316274"/>
    <lineage>
        <taxon>Bacteria</taxon>
        <taxon>Bacillati</taxon>
        <taxon>Chloroflexota</taxon>
        <taxon>Chloroflexia</taxon>
        <taxon>Herpetosiphonales</taxon>
        <taxon>Herpetosiphonaceae</taxon>
        <taxon>Herpetosiphon</taxon>
    </lineage>
</organism>
<keyword id="KW-0067">ATP-binding</keyword>
<keyword id="KW-0143">Chaperone</keyword>
<keyword id="KW-0963">Cytoplasm</keyword>
<keyword id="KW-0413">Isomerase</keyword>
<keyword id="KW-0547">Nucleotide-binding</keyword>
<evidence type="ECO:0000255" key="1">
    <source>
        <dbReference type="HAMAP-Rule" id="MF_00600"/>
    </source>
</evidence>
<sequence>MAKQVAFNEEARRALKRGVDVVADAVKTTLGPRGRNVAIDKKFGSPTVTHDGVTVAKEIELKDPFENMGARLLVEAATKTNDVAGDGTTTATVLAQAIVHEGLRQVAAGANSMMIKRGLDKGTAVLLQAIRDLAKPVNDRTDISSVATISAADSSIGDLIAEVMDKVGKDGVITVEEGKGLGYETEYTEGMQFDRGYISAYFVTNSDRMESDLEDPYILITDKKISSIQEILPVLEKVLQFTKNFVIIAEDIDGEALPTLVLNKLRGTINVLAIKAPGFGDRRKAMLQDIAILTGGTVISEEIGRKLDSATVEDLGRARRVIANKDETTVIEGRGDEDAIKARIEQIRAQIETTTSDFDREKLQERLAKLAGGVAVLKVGAATEPELKERKHRVEDALSTARAAVEEGIVPGGGIALLSVLPALDSVVPANQDEKAAVLILRRALEEPIRQLARNAGEDGAVIIDTVRRLQKEKGDSTLGYNVITGEYGSMVEMGIIDPAKVTRSALQNAVSIASMILTTDALVADIPEKEAAPAPGGMGGMGGMDF</sequence>
<name>CH60_HERA2</name>
<proteinExistence type="inferred from homology"/>
<comment type="function">
    <text evidence="1">Together with its co-chaperonin GroES, plays an essential role in assisting protein folding. The GroEL-GroES system forms a nano-cage that allows encapsulation of the non-native substrate proteins and provides a physical environment optimized to promote and accelerate protein folding.</text>
</comment>
<comment type="catalytic activity">
    <reaction evidence="1">
        <text>ATP + H2O + a folded polypeptide = ADP + phosphate + an unfolded polypeptide.</text>
        <dbReference type="EC" id="5.6.1.7"/>
    </reaction>
</comment>
<comment type="subunit">
    <text evidence="1">Forms a cylinder of 14 subunits composed of two heptameric rings stacked back-to-back. Interacts with the co-chaperonin GroES.</text>
</comment>
<comment type="subcellular location">
    <subcellularLocation>
        <location evidence="1">Cytoplasm</location>
    </subcellularLocation>
</comment>
<comment type="similarity">
    <text evidence="1">Belongs to the chaperonin (HSP60) family.</text>
</comment>